<comment type="function">
    <text evidence="1">Inhibits RpoS proteolysis by regulating RssB activity, thereby increasing the stability of the sigma stress factor RpoS during oxidative stress. Its effect on RpoS stability is due to its interaction with RssB, which probably blocks the interaction of RssB with RpoS, and the consequent delivery of the RssB-RpoS complex to the ClpXP protein degradation pathway.</text>
</comment>
<comment type="subunit">
    <text evidence="1">Interacts with RssB.</text>
</comment>
<comment type="subcellular location">
    <subcellularLocation>
        <location evidence="1">Cytoplasm</location>
    </subcellularLocation>
</comment>
<comment type="similarity">
    <text evidence="1">Belongs to the GpW/Gp25 family. IraD subfamily.</text>
</comment>
<keyword id="KW-0963">Cytoplasm</keyword>
<keyword id="KW-0346">Stress response</keyword>
<gene>
    <name evidence="1" type="primary">iraD</name>
    <name type="ordered locus">ECIAI39_4800</name>
</gene>
<accession>B7NV97</accession>
<feature type="chain" id="PRO_1000189481" description="Anti-adapter protein IraD">
    <location>
        <begin position="1"/>
        <end position="130"/>
    </location>
</feature>
<evidence type="ECO:0000255" key="1">
    <source>
        <dbReference type="HAMAP-Rule" id="MF_02010"/>
    </source>
</evidence>
<name>IRAD_ECO7I</name>
<organism>
    <name type="scientific">Escherichia coli O7:K1 (strain IAI39 / ExPEC)</name>
    <dbReference type="NCBI Taxonomy" id="585057"/>
    <lineage>
        <taxon>Bacteria</taxon>
        <taxon>Pseudomonadati</taxon>
        <taxon>Pseudomonadota</taxon>
        <taxon>Gammaproteobacteria</taxon>
        <taxon>Enterobacterales</taxon>
        <taxon>Enterobacteriaceae</taxon>
        <taxon>Escherichia</taxon>
    </lineage>
</organism>
<reference key="1">
    <citation type="journal article" date="2009" name="PLoS Genet.">
        <title>Organised genome dynamics in the Escherichia coli species results in highly diverse adaptive paths.</title>
        <authorList>
            <person name="Touchon M."/>
            <person name="Hoede C."/>
            <person name="Tenaillon O."/>
            <person name="Barbe V."/>
            <person name="Baeriswyl S."/>
            <person name="Bidet P."/>
            <person name="Bingen E."/>
            <person name="Bonacorsi S."/>
            <person name="Bouchier C."/>
            <person name="Bouvet O."/>
            <person name="Calteau A."/>
            <person name="Chiapello H."/>
            <person name="Clermont O."/>
            <person name="Cruveiller S."/>
            <person name="Danchin A."/>
            <person name="Diard M."/>
            <person name="Dossat C."/>
            <person name="Karoui M.E."/>
            <person name="Frapy E."/>
            <person name="Garry L."/>
            <person name="Ghigo J.M."/>
            <person name="Gilles A.M."/>
            <person name="Johnson J."/>
            <person name="Le Bouguenec C."/>
            <person name="Lescat M."/>
            <person name="Mangenot S."/>
            <person name="Martinez-Jehanne V."/>
            <person name="Matic I."/>
            <person name="Nassif X."/>
            <person name="Oztas S."/>
            <person name="Petit M.A."/>
            <person name="Pichon C."/>
            <person name="Rouy Z."/>
            <person name="Ruf C.S."/>
            <person name="Schneider D."/>
            <person name="Tourret J."/>
            <person name="Vacherie B."/>
            <person name="Vallenet D."/>
            <person name="Medigue C."/>
            <person name="Rocha E.P.C."/>
            <person name="Denamur E."/>
        </authorList>
    </citation>
    <scope>NUCLEOTIDE SEQUENCE [LARGE SCALE GENOMIC DNA]</scope>
    <source>
        <strain>IAI39 / ExPEC</strain>
    </source>
</reference>
<proteinExistence type="inferred from homology"/>
<protein>
    <recommendedName>
        <fullName evidence="1">Anti-adapter protein IraD</fullName>
    </recommendedName>
</protein>
<dbReference type="EMBL" id="CU928164">
    <property type="protein sequence ID" value="CAR20897.1"/>
    <property type="molecule type" value="Genomic_DNA"/>
</dbReference>
<dbReference type="RefSeq" id="WP_000986224.1">
    <property type="nucleotide sequence ID" value="NC_011750.1"/>
</dbReference>
<dbReference type="RefSeq" id="YP_002410655.1">
    <property type="nucleotide sequence ID" value="NC_011750.1"/>
</dbReference>
<dbReference type="SMR" id="B7NV97"/>
<dbReference type="STRING" id="585057.ECIAI39_4800"/>
<dbReference type="GeneID" id="75169819"/>
<dbReference type="KEGG" id="ect:ECIAI39_4800"/>
<dbReference type="PATRIC" id="fig|585057.6.peg.4956"/>
<dbReference type="HOGENOM" id="CLU_1977621_0_0_6"/>
<dbReference type="Proteomes" id="UP000000749">
    <property type="component" value="Chromosome"/>
</dbReference>
<dbReference type="GO" id="GO:0005737">
    <property type="term" value="C:cytoplasm"/>
    <property type="evidence" value="ECO:0007669"/>
    <property type="project" value="UniProtKB-SubCell"/>
</dbReference>
<dbReference type="GO" id="GO:0043856">
    <property type="term" value="F:anti-sigma factor antagonist activity"/>
    <property type="evidence" value="ECO:0007669"/>
    <property type="project" value="InterPro"/>
</dbReference>
<dbReference type="GO" id="GO:0034599">
    <property type="term" value="P:cellular response to oxidative stress"/>
    <property type="evidence" value="ECO:0007669"/>
    <property type="project" value="UniProtKB-UniRule"/>
</dbReference>
<dbReference type="GO" id="GO:0006974">
    <property type="term" value="P:DNA damage response"/>
    <property type="evidence" value="ECO:0007669"/>
    <property type="project" value="InterPro"/>
</dbReference>
<dbReference type="HAMAP" id="MF_02010">
    <property type="entry name" value="IraD"/>
    <property type="match status" value="1"/>
</dbReference>
<dbReference type="InterPro" id="IPR023776">
    <property type="entry name" value="Anti-adapt_IraD"/>
</dbReference>
<dbReference type="InterPro" id="IPR007048">
    <property type="entry name" value="IraD/Gp25-like"/>
</dbReference>
<dbReference type="NCBIfam" id="NF010726">
    <property type="entry name" value="PRK14128.1-1"/>
    <property type="match status" value="1"/>
</dbReference>
<dbReference type="NCBIfam" id="NF010728">
    <property type="entry name" value="PRK14128.1-3"/>
    <property type="match status" value="1"/>
</dbReference>
<dbReference type="Pfam" id="PF04965">
    <property type="entry name" value="GPW_gp25"/>
    <property type="match status" value="1"/>
</dbReference>
<dbReference type="SUPFAM" id="SSF160719">
    <property type="entry name" value="gpW/gp25-like"/>
    <property type="match status" value="1"/>
</dbReference>
<sequence>MMRQSLQAVLPKISGNKTSLLRKSVCSDLLTLFNSPHSALPSLLVSGMPEWQVHNPSDKHLQSWYCRQLRSALLFHEPRIAALQVNLKEAYCHTLAISLEIMLYHDDEPLTFDLVWDNGGWRSATLENVS</sequence>